<dbReference type="EC" id="1.17.7.3" evidence="1"/>
<dbReference type="EMBL" id="CP000822">
    <property type="protein sequence ID" value="ABV11434.1"/>
    <property type="molecule type" value="Genomic_DNA"/>
</dbReference>
<dbReference type="RefSeq" id="WP_012131265.1">
    <property type="nucleotide sequence ID" value="NC_009792.1"/>
</dbReference>
<dbReference type="SMR" id="A8AD71"/>
<dbReference type="STRING" id="290338.CKO_00270"/>
<dbReference type="GeneID" id="45134549"/>
<dbReference type="KEGG" id="cko:CKO_00270"/>
<dbReference type="HOGENOM" id="CLU_042258_0_0_6"/>
<dbReference type="OrthoDB" id="9803214at2"/>
<dbReference type="UniPathway" id="UPA00056">
    <property type="reaction ID" value="UER00096"/>
</dbReference>
<dbReference type="Proteomes" id="UP000008148">
    <property type="component" value="Chromosome"/>
</dbReference>
<dbReference type="GO" id="GO:0051539">
    <property type="term" value="F:4 iron, 4 sulfur cluster binding"/>
    <property type="evidence" value="ECO:0007669"/>
    <property type="project" value="UniProtKB-UniRule"/>
</dbReference>
<dbReference type="GO" id="GO:0046429">
    <property type="term" value="F:4-hydroxy-3-methylbut-2-en-1-yl diphosphate synthase activity (ferredoxin)"/>
    <property type="evidence" value="ECO:0007669"/>
    <property type="project" value="UniProtKB-UniRule"/>
</dbReference>
<dbReference type="GO" id="GO:0141197">
    <property type="term" value="F:4-hydroxy-3-methylbut-2-enyl-diphosphate synthase activity (flavodoxin)"/>
    <property type="evidence" value="ECO:0007669"/>
    <property type="project" value="UniProtKB-EC"/>
</dbReference>
<dbReference type="GO" id="GO:0005506">
    <property type="term" value="F:iron ion binding"/>
    <property type="evidence" value="ECO:0007669"/>
    <property type="project" value="InterPro"/>
</dbReference>
<dbReference type="GO" id="GO:0019288">
    <property type="term" value="P:isopentenyl diphosphate biosynthetic process, methylerythritol 4-phosphate pathway"/>
    <property type="evidence" value="ECO:0007669"/>
    <property type="project" value="UniProtKB-UniRule"/>
</dbReference>
<dbReference type="GO" id="GO:0016114">
    <property type="term" value="P:terpenoid biosynthetic process"/>
    <property type="evidence" value="ECO:0007669"/>
    <property type="project" value="InterPro"/>
</dbReference>
<dbReference type="FunFam" id="3.20.20.20:FF:000001">
    <property type="entry name" value="4-hydroxy-3-methylbut-2-en-1-yl diphosphate synthase (flavodoxin)"/>
    <property type="match status" value="1"/>
</dbReference>
<dbReference type="FunFam" id="3.30.413.10:FF:000002">
    <property type="entry name" value="4-hydroxy-3-methylbut-2-en-1-yl diphosphate synthase (flavodoxin)"/>
    <property type="match status" value="1"/>
</dbReference>
<dbReference type="Gene3D" id="3.20.20.20">
    <property type="entry name" value="Dihydropteroate synthase-like"/>
    <property type="match status" value="1"/>
</dbReference>
<dbReference type="Gene3D" id="3.30.413.10">
    <property type="entry name" value="Sulfite Reductase Hemoprotein, domain 1"/>
    <property type="match status" value="1"/>
</dbReference>
<dbReference type="HAMAP" id="MF_00159">
    <property type="entry name" value="IspG"/>
    <property type="match status" value="1"/>
</dbReference>
<dbReference type="InterPro" id="IPR011005">
    <property type="entry name" value="Dihydropteroate_synth-like_sf"/>
</dbReference>
<dbReference type="InterPro" id="IPR016425">
    <property type="entry name" value="IspG_bac"/>
</dbReference>
<dbReference type="InterPro" id="IPR004588">
    <property type="entry name" value="IspG_bac-typ"/>
</dbReference>
<dbReference type="InterPro" id="IPR045854">
    <property type="entry name" value="NO2/SO3_Rdtase_4Fe4S_sf"/>
</dbReference>
<dbReference type="NCBIfam" id="TIGR00612">
    <property type="entry name" value="ispG_gcpE"/>
    <property type="match status" value="1"/>
</dbReference>
<dbReference type="NCBIfam" id="NF001540">
    <property type="entry name" value="PRK00366.1"/>
    <property type="match status" value="1"/>
</dbReference>
<dbReference type="PANTHER" id="PTHR30454">
    <property type="entry name" value="4-HYDROXY-3-METHYLBUT-2-EN-1-YL DIPHOSPHATE SYNTHASE"/>
    <property type="match status" value="1"/>
</dbReference>
<dbReference type="PANTHER" id="PTHR30454:SF0">
    <property type="entry name" value="4-HYDROXY-3-METHYLBUT-2-EN-1-YL DIPHOSPHATE SYNTHASE (FERREDOXIN), CHLOROPLASTIC"/>
    <property type="match status" value="1"/>
</dbReference>
<dbReference type="Pfam" id="PF04551">
    <property type="entry name" value="GcpE"/>
    <property type="match status" value="1"/>
</dbReference>
<dbReference type="PIRSF" id="PIRSF004640">
    <property type="entry name" value="IspG"/>
    <property type="match status" value="1"/>
</dbReference>
<dbReference type="SUPFAM" id="SSF51717">
    <property type="entry name" value="Dihydropteroate synthetase-like"/>
    <property type="match status" value="1"/>
</dbReference>
<dbReference type="SUPFAM" id="SSF56014">
    <property type="entry name" value="Nitrite and sulphite reductase 4Fe-4S domain-like"/>
    <property type="match status" value="1"/>
</dbReference>
<organism>
    <name type="scientific">Citrobacter koseri (strain ATCC BAA-895 / CDC 4225-83 / SGSC4696)</name>
    <dbReference type="NCBI Taxonomy" id="290338"/>
    <lineage>
        <taxon>Bacteria</taxon>
        <taxon>Pseudomonadati</taxon>
        <taxon>Pseudomonadota</taxon>
        <taxon>Gammaproteobacteria</taxon>
        <taxon>Enterobacterales</taxon>
        <taxon>Enterobacteriaceae</taxon>
        <taxon>Citrobacter</taxon>
    </lineage>
</organism>
<reference key="1">
    <citation type="submission" date="2007-08" db="EMBL/GenBank/DDBJ databases">
        <authorList>
            <consortium name="The Citrobacter koseri Genome Sequencing Project"/>
            <person name="McClelland M."/>
            <person name="Sanderson E.K."/>
            <person name="Porwollik S."/>
            <person name="Spieth J."/>
            <person name="Clifton W.S."/>
            <person name="Latreille P."/>
            <person name="Courtney L."/>
            <person name="Wang C."/>
            <person name="Pepin K."/>
            <person name="Bhonagiri V."/>
            <person name="Nash W."/>
            <person name="Johnson M."/>
            <person name="Thiruvilangam P."/>
            <person name="Wilson R."/>
        </authorList>
    </citation>
    <scope>NUCLEOTIDE SEQUENCE [LARGE SCALE GENOMIC DNA]</scope>
    <source>
        <strain>ATCC BAA-895 / CDC 4225-83 / SGSC4696</strain>
    </source>
</reference>
<keyword id="KW-0004">4Fe-4S</keyword>
<keyword id="KW-0408">Iron</keyword>
<keyword id="KW-0411">Iron-sulfur</keyword>
<keyword id="KW-0414">Isoprene biosynthesis</keyword>
<keyword id="KW-0479">Metal-binding</keyword>
<keyword id="KW-0560">Oxidoreductase</keyword>
<keyword id="KW-1185">Reference proteome</keyword>
<name>ISPG_CITK8</name>
<evidence type="ECO:0000255" key="1">
    <source>
        <dbReference type="HAMAP-Rule" id="MF_00159"/>
    </source>
</evidence>
<feature type="chain" id="PRO_1000011457" description="4-hydroxy-3-methylbut-2-en-1-yl diphosphate synthase (flavodoxin)">
    <location>
        <begin position="1"/>
        <end position="372"/>
    </location>
</feature>
<feature type="binding site" evidence="1">
    <location>
        <position position="270"/>
    </location>
    <ligand>
        <name>[4Fe-4S] cluster</name>
        <dbReference type="ChEBI" id="CHEBI:49883"/>
    </ligand>
</feature>
<feature type="binding site" evidence="1">
    <location>
        <position position="273"/>
    </location>
    <ligand>
        <name>[4Fe-4S] cluster</name>
        <dbReference type="ChEBI" id="CHEBI:49883"/>
    </ligand>
</feature>
<feature type="binding site" evidence="1">
    <location>
        <position position="305"/>
    </location>
    <ligand>
        <name>[4Fe-4S] cluster</name>
        <dbReference type="ChEBI" id="CHEBI:49883"/>
    </ligand>
</feature>
<feature type="binding site" evidence="1">
    <location>
        <position position="312"/>
    </location>
    <ligand>
        <name>[4Fe-4S] cluster</name>
        <dbReference type="ChEBI" id="CHEBI:49883"/>
    </ligand>
</feature>
<accession>A8AD71</accession>
<gene>
    <name evidence="1" type="primary">ispG</name>
    <name type="ordered locus">CKO_00270</name>
</gene>
<proteinExistence type="inferred from homology"/>
<comment type="function">
    <text evidence="1">Converts 2C-methyl-D-erythritol 2,4-cyclodiphosphate (ME-2,4cPP) into 1-hydroxy-2-methyl-2-(E)-butenyl 4-diphosphate.</text>
</comment>
<comment type="catalytic activity">
    <reaction evidence="1">
        <text>(2E)-4-hydroxy-3-methylbut-2-enyl diphosphate + oxidized [flavodoxin] + H2O + 2 H(+) = 2-C-methyl-D-erythritol 2,4-cyclic diphosphate + reduced [flavodoxin]</text>
        <dbReference type="Rhea" id="RHEA:43604"/>
        <dbReference type="Rhea" id="RHEA-COMP:10622"/>
        <dbReference type="Rhea" id="RHEA-COMP:10623"/>
        <dbReference type="ChEBI" id="CHEBI:15377"/>
        <dbReference type="ChEBI" id="CHEBI:15378"/>
        <dbReference type="ChEBI" id="CHEBI:57618"/>
        <dbReference type="ChEBI" id="CHEBI:58210"/>
        <dbReference type="ChEBI" id="CHEBI:58483"/>
        <dbReference type="ChEBI" id="CHEBI:128753"/>
        <dbReference type="EC" id="1.17.7.3"/>
    </reaction>
</comment>
<comment type="cofactor">
    <cofactor evidence="1">
        <name>[4Fe-4S] cluster</name>
        <dbReference type="ChEBI" id="CHEBI:49883"/>
    </cofactor>
    <text evidence="1">Binds 1 [4Fe-4S] cluster.</text>
</comment>
<comment type="pathway">
    <text evidence="1">Isoprenoid biosynthesis; isopentenyl diphosphate biosynthesis via DXP pathway; isopentenyl diphosphate from 1-deoxy-D-xylulose 5-phosphate: step 5/6.</text>
</comment>
<comment type="similarity">
    <text evidence="1">Belongs to the IspG family.</text>
</comment>
<protein>
    <recommendedName>
        <fullName evidence="1">4-hydroxy-3-methylbut-2-en-1-yl diphosphate synthase (flavodoxin)</fullName>
        <ecNumber evidence="1">1.17.7.3</ecNumber>
    </recommendedName>
    <alternativeName>
        <fullName evidence="1">1-hydroxy-2-methyl-2-(E)-butenyl 4-diphosphate synthase</fullName>
    </alternativeName>
</protein>
<sequence>MHNQAPIQRRKSKRIYVGNVPIGDGAPIAVQSMTNTRTTDVEATVNQIKALERVGADIVRVSVPTMDAAEAFKLIKQQVNVPLVADIHFDYRIALKVAEYGVDCLRINPGNIGNEERIRTVVDCARDKNIPIRIGVNAGSLEKDLQEKYGEPTPQALLESAMRHVDHLDRLNFDQFKVSVKASDVFLAVESYRLLAKQIEQPLHLGITEAGGARSGAVKSAIGLGLLLSEGIGDTLRVSLAADPVEEIKVGFDILKSLRIRARGINFIACPTCSRQEFDVIGTVNALEQRLEDIITPMDVSIIGCVVNGPGEALVSTLGVTGGNKKSGLYEDGVRKDRLDNDDMITQLEARIRAKASIMDEARRIDVQQVEK</sequence>